<keyword id="KW-1185">Reference proteome</keyword>
<keyword id="KW-0687">Ribonucleoprotein</keyword>
<keyword id="KW-0689">Ribosomal protein</keyword>
<keyword id="KW-0694">RNA-binding</keyword>
<keyword id="KW-0699">rRNA-binding</keyword>
<protein>
    <recommendedName>
        <fullName evidence="1">Small ribosomal subunit protein uS14</fullName>
    </recommendedName>
    <alternativeName>
        <fullName evidence="2">30S ribosomal protein S14</fullName>
    </alternativeName>
</protein>
<evidence type="ECO:0000255" key="1">
    <source>
        <dbReference type="HAMAP-Rule" id="MF_00537"/>
    </source>
</evidence>
<evidence type="ECO:0000305" key="2"/>
<name>RS14_STRMK</name>
<gene>
    <name evidence="1" type="primary">rpsN</name>
    <name type="ordered locus">Smlt0919</name>
</gene>
<proteinExistence type="inferred from homology"/>
<reference key="1">
    <citation type="journal article" date="2008" name="Genome Biol.">
        <title>The complete genome, comparative and functional analysis of Stenotrophomonas maltophilia reveals an organism heavily shielded by drug resistance determinants.</title>
        <authorList>
            <person name="Crossman L.C."/>
            <person name="Gould V.C."/>
            <person name="Dow J.M."/>
            <person name="Vernikos G.S."/>
            <person name="Okazaki A."/>
            <person name="Sebaihia M."/>
            <person name="Saunders D."/>
            <person name="Arrowsmith C."/>
            <person name="Carver T."/>
            <person name="Peters N."/>
            <person name="Adlem E."/>
            <person name="Kerhornou A."/>
            <person name="Lord A."/>
            <person name="Murphy L."/>
            <person name="Seeger K."/>
            <person name="Squares R."/>
            <person name="Rutter S."/>
            <person name="Quail M.A."/>
            <person name="Rajandream M.A."/>
            <person name="Harris D."/>
            <person name="Churcher C."/>
            <person name="Bentley S.D."/>
            <person name="Parkhill J."/>
            <person name="Thomson N.R."/>
            <person name="Avison M.B."/>
        </authorList>
    </citation>
    <scope>NUCLEOTIDE SEQUENCE [LARGE SCALE GENOMIC DNA]</scope>
    <source>
        <strain>K279a</strain>
    </source>
</reference>
<feature type="chain" id="PRO_1000128604" description="Small ribosomal subunit protein uS14">
    <location>
        <begin position="1"/>
        <end position="101"/>
    </location>
</feature>
<dbReference type="EMBL" id="AM743169">
    <property type="protein sequence ID" value="CAQ44488.1"/>
    <property type="molecule type" value="Genomic_DNA"/>
</dbReference>
<dbReference type="RefSeq" id="WP_005408209.1">
    <property type="nucleotide sequence ID" value="NC_010943.1"/>
</dbReference>
<dbReference type="SMR" id="B2FQJ7"/>
<dbReference type="EnsemblBacteria" id="CAQ44488">
    <property type="protein sequence ID" value="CAQ44488"/>
    <property type="gene ID" value="Smlt0919"/>
</dbReference>
<dbReference type="GeneID" id="97259947"/>
<dbReference type="KEGG" id="sml:Smlt0919"/>
<dbReference type="eggNOG" id="COG0199">
    <property type="taxonomic scope" value="Bacteria"/>
</dbReference>
<dbReference type="HOGENOM" id="CLU_139869_0_1_6"/>
<dbReference type="Proteomes" id="UP000008840">
    <property type="component" value="Chromosome"/>
</dbReference>
<dbReference type="GO" id="GO:0005737">
    <property type="term" value="C:cytoplasm"/>
    <property type="evidence" value="ECO:0007669"/>
    <property type="project" value="UniProtKB-ARBA"/>
</dbReference>
<dbReference type="GO" id="GO:0015935">
    <property type="term" value="C:small ribosomal subunit"/>
    <property type="evidence" value="ECO:0007669"/>
    <property type="project" value="TreeGrafter"/>
</dbReference>
<dbReference type="GO" id="GO:0019843">
    <property type="term" value="F:rRNA binding"/>
    <property type="evidence" value="ECO:0007669"/>
    <property type="project" value="UniProtKB-UniRule"/>
</dbReference>
<dbReference type="GO" id="GO:0003735">
    <property type="term" value="F:structural constituent of ribosome"/>
    <property type="evidence" value="ECO:0007669"/>
    <property type="project" value="InterPro"/>
</dbReference>
<dbReference type="GO" id="GO:0006412">
    <property type="term" value="P:translation"/>
    <property type="evidence" value="ECO:0007669"/>
    <property type="project" value="UniProtKB-UniRule"/>
</dbReference>
<dbReference type="FunFam" id="1.10.287.1480:FF:000001">
    <property type="entry name" value="30S ribosomal protein S14"/>
    <property type="match status" value="1"/>
</dbReference>
<dbReference type="Gene3D" id="1.10.287.1480">
    <property type="match status" value="1"/>
</dbReference>
<dbReference type="HAMAP" id="MF_00537">
    <property type="entry name" value="Ribosomal_uS14_1"/>
    <property type="match status" value="1"/>
</dbReference>
<dbReference type="InterPro" id="IPR001209">
    <property type="entry name" value="Ribosomal_uS14"/>
</dbReference>
<dbReference type="InterPro" id="IPR023036">
    <property type="entry name" value="Ribosomal_uS14_bac/plastid"/>
</dbReference>
<dbReference type="NCBIfam" id="NF006477">
    <property type="entry name" value="PRK08881.1"/>
    <property type="match status" value="1"/>
</dbReference>
<dbReference type="PANTHER" id="PTHR19836">
    <property type="entry name" value="30S RIBOSOMAL PROTEIN S14"/>
    <property type="match status" value="1"/>
</dbReference>
<dbReference type="PANTHER" id="PTHR19836:SF19">
    <property type="entry name" value="SMALL RIBOSOMAL SUBUNIT PROTEIN US14M"/>
    <property type="match status" value="1"/>
</dbReference>
<dbReference type="Pfam" id="PF00253">
    <property type="entry name" value="Ribosomal_S14"/>
    <property type="match status" value="1"/>
</dbReference>
<dbReference type="SUPFAM" id="SSF57716">
    <property type="entry name" value="Glucocorticoid receptor-like (DNA-binding domain)"/>
    <property type="match status" value="1"/>
</dbReference>
<comment type="function">
    <text evidence="1">Binds 16S rRNA, required for the assembly of 30S particles and may also be responsible for determining the conformation of the 16S rRNA at the A site.</text>
</comment>
<comment type="subunit">
    <text evidence="1">Part of the 30S ribosomal subunit. Contacts proteins S3 and S10.</text>
</comment>
<comment type="similarity">
    <text evidence="1">Belongs to the universal ribosomal protein uS14 family.</text>
</comment>
<accession>B2FQJ7</accession>
<organism>
    <name type="scientific">Stenotrophomonas maltophilia (strain K279a)</name>
    <dbReference type="NCBI Taxonomy" id="522373"/>
    <lineage>
        <taxon>Bacteria</taxon>
        <taxon>Pseudomonadati</taxon>
        <taxon>Pseudomonadota</taxon>
        <taxon>Gammaproteobacteria</taxon>
        <taxon>Lysobacterales</taxon>
        <taxon>Lysobacteraceae</taxon>
        <taxon>Stenotrophomonas</taxon>
        <taxon>Stenotrophomonas maltophilia group</taxon>
    </lineage>
</organism>
<sequence>MAKTSMVNRDIKREKLAKKYAEKRAALKKIVSSVDATYEEKIDAATKLAKLPRDSSPSRQRNRCELSGRPRGVYSKFGLGRNKLREATMRGDVPGLRKASW</sequence>